<feature type="chain" id="PRO_0000334934" description="Ribonuclease HII">
    <location>
        <begin position="1"/>
        <end position="266"/>
    </location>
</feature>
<feature type="domain" description="RNase H type-2" evidence="2">
    <location>
        <begin position="73"/>
        <end position="266"/>
    </location>
</feature>
<feature type="binding site" evidence="1">
    <location>
        <position position="79"/>
    </location>
    <ligand>
        <name>a divalent metal cation</name>
        <dbReference type="ChEBI" id="CHEBI:60240"/>
    </ligand>
</feature>
<feature type="binding site" evidence="1">
    <location>
        <position position="80"/>
    </location>
    <ligand>
        <name>a divalent metal cation</name>
        <dbReference type="ChEBI" id="CHEBI:60240"/>
    </ligand>
</feature>
<feature type="binding site" evidence="1">
    <location>
        <position position="173"/>
    </location>
    <ligand>
        <name>a divalent metal cation</name>
        <dbReference type="ChEBI" id="CHEBI:60240"/>
    </ligand>
</feature>
<name>RNH2_PELTS</name>
<protein>
    <recommendedName>
        <fullName evidence="1">Ribonuclease HII</fullName>
        <shortName evidence="1">RNase HII</shortName>
        <ecNumber evidence="1">3.1.26.4</ecNumber>
    </recommendedName>
</protein>
<organism>
    <name type="scientific">Pelotomaculum thermopropionicum (strain DSM 13744 / JCM 10971 / SI)</name>
    <dbReference type="NCBI Taxonomy" id="370438"/>
    <lineage>
        <taxon>Bacteria</taxon>
        <taxon>Bacillati</taxon>
        <taxon>Bacillota</taxon>
        <taxon>Clostridia</taxon>
        <taxon>Eubacteriales</taxon>
        <taxon>Desulfotomaculaceae</taxon>
        <taxon>Pelotomaculum</taxon>
    </lineage>
</organism>
<comment type="function">
    <text evidence="1">Endonuclease that specifically degrades the RNA of RNA-DNA hybrids.</text>
</comment>
<comment type="catalytic activity">
    <reaction evidence="1">
        <text>Endonucleolytic cleavage to 5'-phosphomonoester.</text>
        <dbReference type="EC" id="3.1.26.4"/>
    </reaction>
</comment>
<comment type="cofactor">
    <cofactor evidence="1">
        <name>Mn(2+)</name>
        <dbReference type="ChEBI" id="CHEBI:29035"/>
    </cofactor>
    <cofactor evidence="1">
        <name>Mg(2+)</name>
        <dbReference type="ChEBI" id="CHEBI:18420"/>
    </cofactor>
    <text evidence="1">Manganese or magnesium. Binds 1 divalent metal ion per monomer in the absence of substrate. May bind a second metal ion after substrate binding.</text>
</comment>
<comment type="subcellular location">
    <subcellularLocation>
        <location evidence="1">Cytoplasm</location>
    </subcellularLocation>
</comment>
<comment type="similarity">
    <text evidence="1">Belongs to the RNase HII family.</text>
</comment>
<evidence type="ECO:0000255" key="1">
    <source>
        <dbReference type="HAMAP-Rule" id="MF_00052"/>
    </source>
</evidence>
<evidence type="ECO:0000255" key="2">
    <source>
        <dbReference type="PROSITE-ProRule" id="PRU01319"/>
    </source>
</evidence>
<reference key="1">
    <citation type="journal article" date="2008" name="Genome Res.">
        <title>The genome of Pelotomaculum thermopropionicum reveals niche-associated evolution in anaerobic microbiota.</title>
        <authorList>
            <person name="Kosaka T."/>
            <person name="Kato S."/>
            <person name="Shimoyama T."/>
            <person name="Ishii S."/>
            <person name="Abe T."/>
            <person name="Watanabe K."/>
        </authorList>
    </citation>
    <scope>NUCLEOTIDE SEQUENCE [LARGE SCALE GENOMIC DNA]</scope>
    <source>
        <strain>DSM 13744 / JCM 10971 / SI</strain>
    </source>
</reference>
<accession>A5D1I3</accession>
<sequence length="266" mass="28907">MVSGLTVAEIRKLAGSRAGLDEDFLRALACDKRAGVAEIYRRLKRDENKMAAEAERLQKLYIYENSLIAQGYSPVAGVDEAGRGPLAGPVVAAAVILPPVADLALAGLNDSKKLNPSKRAELAARIKKVALAWSAGISTVEEIFNENIHAASLTAMRRAVLKLKIRPAYLLVDGYRISRLELPQLALTGGDGLSASVAAASILAKVLRDRLMDFYHVQYPQYGFNRHKGYATPEHLAALERYGPCPLHRAGYRPVKNCGSRQKCEG</sequence>
<keyword id="KW-0963">Cytoplasm</keyword>
<keyword id="KW-0255">Endonuclease</keyword>
<keyword id="KW-0378">Hydrolase</keyword>
<keyword id="KW-0464">Manganese</keyword>
<keyword id="KW-0479">Metal-binding</keyword>
<keyword id="KW-0540">Nuclease</keyword>
<keyword id="KW-1185">Reference proteome</keyword>
<dbReference type="EC" id="3.1.26.4" evidence="1"/>
<dbReference type="EMBL" id="AP009389">
    <property type="protein sequence ID" value="BAF59889.1"/>
    <property type="molecule type" value="Genomic_DNA"/>
</dbReference>
<dbReference type="SMR" id="A5D1I3"/>
<dbReference type="STRING" id="370438.PTH_1708"/>
<dbReference type="KEGG" id="pth:PTH_1708"/>
<dbReference type="eggNOG" id="COG0164">
    <property type="taxonomic scope" value="Bacteria"/>
</dbReference>
<dbReference type="HOGENOM" id="CLU_036532_2_1_9"/>
<dbReference type="Proteomes" id="UP000006556">
    <property type="component" value="Chromosome"/>
</dbReference>
<dbReference type="GO" id="GO:0005737">
    <property type="term" value="C:cytoplasm"/>
    <property type="evidence" value="ECO:0007669"/>
    <property type="project" value="UniProtKB-SubCell"/>
</dbReference>
<dbReference type="GO" id="GO:0032299">
    <property type="term" value="C:ribonuclease H2 complex"/>
    <property type="evidence" value="ECO:0007669"/>
    <property type="project" value="TreeGrafter"/>
</dbReference>
<dbReference type="GO" id="GO:0030145">
    <property type="term" value="F:manganese ion binding"/>
    <property type="evidence" value="ECO:0007669"/>
    <property type="project" value="UniProtKB-UniRule"/>
</dbReference>
<dbReference type="GO" id="GO:0003723">
    <property type="term" value="F:RNA binding"/>
    <property type="evidence" value="ECO:0007669"/>
    <property type="project" value="InterPro"/>
</dbReference>
<dbReference type="GO" id="GO:0004523">
    <property type="term" value="F:RNA-DNA hybrid ribonuclease activity"/>
    <property type="evidence" value="ECO:0007669"/>
    <property type="project" value="UniProtKB-UniRule"/>
</dbReference>
<dbReference type="GO" id="GO:0043137">
    <property type="term" value="P:DNA replication, removal of RNA primer"/>
    <property type="evidence" value="ECO:0007669"/>
    <property type="project" value="TreeGrafter"/>
</dbReference>
<dbReference type="GO" id="GO:0006298">
    <property type="term" value="P:mismatch repair"/>
    <property type="evidence" value="ECO:0007669"/>
    <property type="project" value="TreeGrafter"/>
</dbReference>
<dbReference type="CDD" id="cd07182">
    <property type="entry name" value="RNase_HII_bacteria_HII_like"/>
    <property type="match status" value="1"/>
</dbReference>
<dbReference type="Gene3D" id="3.30.420.10">
    <property type="entry name" value="Ribonuclease H-like superfamily/Ribonuclease H"/>
    <property type="match status" value="1"/>
</dbReference>
<dbReference type="HAMAP" id="MF_00052_B">
    <property type="entry name" value="RNase_HII_B"/>
    <property type="match status" value="1"/>
</dbReference>
<dbReference type="InterPro" id="IPR022898">
    <property type="entry name" value="RNase_HII"/>
</dbReference>
<dbReference type="InterPro" id="IPR001352">
    <property type="entry name" value="RNase_HII/HIII"/>
</dbReference>
<dbReference type="InterPro" id="IPR024567">
    <property type="entry name" value="RNase_HII/HIII_dom"/>
</dbReference>
<dbReference type="InterPro" id="IPR012337">
    <property type="entry name" value="RNaseH-like_sf"/>
</dbReference>
<dbReference type="InterPro" id="IPR036397">
    <property type="entry name" value="RNaseH_sf"/>
</dbReference>
<dbReference type="NCBIfam" id="NF000594">
    <property type="entry name" value="PRK00015.1-1"/>
    <property type="match status" value="1"/>
</dbReference>
<dbReference type="NCBIfam" id="NF000595">
    <property type="entry name" value="PRK00015.1-3"/>
    <property type="match status" value="1"/>
</dbReference>
<dbReference type="PANTHER" id="PTHR10954">
    <property type="entry name" value="RIBONUCLEASE H2 SUBUNIT A"/>
    <property type="match status" value="1"/>
</dbReference>
<dbReference type="PANTHER" id="PTHR10954:SF18">
    <property type="entry name" value="RIBONUCLEASE HII"/>
    <property type="match status" value="1"/>
</dbReference>
<dbReference type="Pfam" id="PF01351">
    <property type="entry name" value="RNase_HII"/>
    <property type="match status" value="1"/>
</dbReference>
<dbReference type="SUPFAM" id="SSF53098">
    <property type="entry name" value="Ribonuclease H-like"/>
    <property type="match status" value="1"/>
</dbReference>
<dbReference type="PROSITE" id="PS51975">
    <property type="entry name" value="RNASE_H_2"/>
    <property type="match status" value="1"/>
</dbReference>
<gene>
    <name evidence="1" type="primary">rnhB</name>
    <name type="ordered locus">PTH_1708</name>
</gene>
<proteinExistence type="inferred from homology"/>